<feature type="chain" id="PRO_1000119333" description="Potassium-transporting ATPase potassium-binding subunit">
    <location>
        <begin position="1"/>
        <end position="555"/>
    </location>
</feature>
<feature type="transmembrane region" description="Helical" evidence="1">
    <location>
        <begin position="2"/>
        <end position="22"/>
    </location>
</feature>
<feature type="transmembrane region" description="Helical" evidence="1">
    <location>
        <begin position="60"/>
        <end position="80"/>
    </location>
</feature>
<feature type="transmembrane region" description="Helical" evidence="1">
    <location>
        <begin position="130"/>
        <end position="150"/>
    </location>
</feature>
<feature type="transmembrane region" description="Helical" evidence="1">
    <location>
        <begin position="173"/>
        <end position="193"/>
    </location>
</feature>
<feature type="transmembrane region" description="Helical" evidence="1">
    <location>
        <begin position="246"/>
        <end position="266"/>
    </location>
</feature>
<feature type="transmembrane region" description="Helical" evidence="1">
    <location>
        <begin position="278"/>
        <end position="298"/>
    </location>
</feature>
<feature type="transmembrane region" description="Helical" evidence="1">
    <location>
        <begin position="374"/>
        <end position="394"/>
    </location>
</feature>
<feature type="transmembrane region" description="Helical" evidence="1">
    <location>
        <begin position="412"/>
        <end position="432"/>
    </location>
</feature>
<feature type="transmembrane region" description="Helical" evidence="1">
    <location>
        <begin position="483"/>
        <end position="503"/>
    </location>
</feature>
<feature type="transmembrane region" description="Helical" evidence="1">
    <location>
        <begin position="525"/>
        <end position="545"/>
    </location>
</feature>
<accession>B7HWG0</accession>
<evidence type="ECO:0000255" key="1">
    <source>
        <dbReference type="HAMAP-Rule" id="MF_00275"/>
    </source>
</evidence>
<dbReference type="EMBL" id="CP001177">
    <property type="protein sequence ID" value="ACJ77994.1"/>
    <property type="molecule type" value="Genomic_DNA"/>
</dbReference>
<dbReference type="SMR" id="B7HWG0"/>
<dbReference type="KEGG" id="bcr:BCAH187_A0894"/>
<dbReference type="HOGENOM" id="CLU_018614_3_0_9"/>
<dbReference type="Proteomes" id="UP000002214">
    <property type="component" value="Chromosome"/>
</dbReference>
<dbReference type="GO" id="GO:0005886">
    <property type="term" value="C:plasma membrane"/>
    <property type="evidence" value="ECO:0007669"/>
    <property type="project" value="UniProtKB-SubCell"/>
</dbReference>
<dbReference type="GO" id="GO:0008556">
    <property type="term" value="F:P-type potassium transmembrane transporter activity"/>
    <property type="evidence" value="ECO:0007669"/>
    <property type="project" value="InterPro"/>
</dbReference>
<dbReference type="GO" id="GO:0030955">
    <property type="term" value="F:potassium ion binding"/>
    <property type="evidence" value="ECO:0007669"/>
    <property type="project" value="UniProtKB-UniRule"/>
</dbReference>
<dbReference type="HAMAP" id="MF_00275">
    <property type="entry name" value="KdpA"/>
    <property type="match status" value="1"/>
</dbReference>
<dbReference type="InterPro" id="IPR004623">
    <property type="entry name" value="KdpA"/>
</dbReference>
<dbReference type="NCBIfam" id="TIGR00680">
    <property type="entry name" value="kdpA"/>
    <property type="match status" value="1"/>
</dbReference>
<dbReference type="PANTHER" id="PTHR30607">
    <property type="entry name" value="POTASSIUM-TRANSPORTING ATPASE A CHAIN"/>
    <property type="match status" value="1"/>
</dbReference>
<dbReference type="PANTHER" id="PTHR30607:SF2">
    <property type="entry name" value="POTASSIUM-TRANSPORTING ATPASE POTASSIUM-BINDING SUBUNIT"/>
    <property type="match status" value="1"/>
</dbReference>
<dbReference type="Pfam" id="PF03814">
    <property type="entry name" value="KdpA"/>
    <property type="match status" value="1"/>
</dbReference>
<dbReference type="PIRSF" id="PIRSF001294">
    <property type="entry name" value="K_ATPaseA"/>
    <property type="match status" value="1"/>
</dbReference>
<proteinExistence type="inferred from homology"/>
<comment type="function">
    <text evidence="1">Part of the high-affinity ATP-driven potassium transport (or Kdp) system, which catalyzes the hydrolysis of ATP coupled with the electrogenic transport of potassium into the cytoplasm. This subunit binds the extracellular potassium ions and delivers the ions to the membrane domain of KdpB through an intramembrane tunnel.</text>
</comment>
<comment type="subunit">
    <text evidence="1">The system is composed of three essential subunits: KdpA, KdpB and KdpC.</text>
</comment>
<comment type="subcellular location">
    <subcellularLocation>
        <location evidence="1">Cell membrane</location>
        <topology evidence="1">Multi-pass membrane protein</topology>
    </subcellularLocation>
</comment>
<comment type="similarity">
    <text evidence="1">Belongs to the KdpA family.</text>
</comment>
<organism>
    <name type="scientific">Bacillus cereus (strain AH187)</name>
    <dbReference type="NCBI Taxonomy" id="405534"/>
    <lineage>
        <taxon>Bacteria</taxon>
        <taxon>Bacillati</taxon>
        <taxon>Bacillota</taxon>
        <taxon>Bacilli</taxon>
        <taxon>Bacillales</taxon>
        <taxon>Bacillaceae</taxon>
        <taxon>Bacillus</taxon>
        <taxon>Bacillus cereus group</taxon>
    </lineage>
</organism>
<gene>
    <name evidence="1" type="primary">kdpA</name>
    <name type="ordered locus">BCAH187_A0894</name>
</gene>
<sequence>MIWVAVVITMLLFILVAKPTGIYLEKTFQGSKKLDKVFGPFEKLIFKITGVKEYNQTWKQYALSLVLLNGFMIVVVYFIFRLQGVLPLNPAHIEGMEPTLAFNTAISFMADTNLQHYSGENGLSYLSQLIGITFLMFAAPATTLALVMAFIRGLAGKELGNFFVDFTRALTRVFLPITFMAALVFVALGVPQTLDGAVTAQTIDGAKQSILRGPVASFVSIKELGNNGGGFFGANSTHPFENPGQMSNILQMMLMMLLPTALPFTYGRMVGNKKQGRILFVSLFMVFLLGFITITTSELNGNPALNGMGIEHVQGSTEGKEVRFGTVFSSLYATVTTAAETGAVNTMHDTLTPIGGLVPLVNMMLNTVYGGVGAGFVNIIMYAIIAVFISGLMVGRTPEFLGKKIEGKEMKLIAVTILFHPLLILGFSALALSTSLGTDAISHSGFHGLTQVVYEYTSSAANNGSGFEGLADNTPFWNITTGLVMFLGRYFSLITMLAVAASLKEKTVVPETVGTFRTDNSLFGGIFIGTIVIVGALTFFPMLVLGPIAEFLTLK</sequence>
<name>KDPA_BACC7</name>
<keyword id="KW-1003">Cell membrane</keyword>
<keyword id="KW-0406">Ion transport</keyword>
<keyword id="KW-0472">Membrane</keyword>
<keyword id="KW-0630">Potassium</keyword>
<keyword id="KW-0633">Potassium transport</keyword>
<keyword id="KW-0812">Transmembrane</keyword>
<keyword id="KW-1133">Transmembrane helix</keyword>
<keyword id="KW-0813">Transport</keyword>
<reference key="1">
    <citation type="submission" date="2008-10" db="EMBL/GenBank/DDBJ databases">
        <title>Genome sequence of Bacillus cereus AH187.</title>
        <authorList>
            <person name="Dodson R.J."/>
            <person name="Durkin A.S."/>
            <person name="Rosovitz M.J."/>
            <person name="Rasko D.A."/>
            <person name="Kolsto A.B."/>
            <person name="Okstad O.A."/>
            <person name="Ravel J."/>
            <person name="Sutton G."/>
        </authorList>
    </citation>
    <scope>NUCLEOTIDE SEQUENCE [LARGE SCALE GENOMIC DNA]</scope>
    <source>
        <strain>AH187</strain>
    </source>
</reference>
<protein>
    <recommendedName>
        <fullName evidence="1">Potassium-transporting ATPase potassium-binding subunit</fullName>
    </recommendedName>
    <alternativeName>
        <fullName evidence="1">ATP phosphohydrolase [potassium-transporting] A chain</fullName>
    </alternativeName>
    <alternativeName>
        <fullName evidence="1">Potassium-binding and translocating subunit A</fullName>
    </alternativeName>
    <alternativeName>
        <fullName evidence="1">Potassium-translocating ATPase A chain</fullName>
    </alternativeName>
</protein>